<feature type="chain" id="PRO_1000202307" description="Elongation factor G">
    <location>
        <begin position="1"/>
        <end position="704"/>
    </location>
</feature>
<feature type="domain" description="tr-type G">
    <location>
        <begin position="8"/>
        <end position="290"/>
    </location>
</feature>
<feature type="binding site" evidence="1">
    <location>
        <begin position="17"/>
        <end position="24"/>
    </location>
    <ligand>
        <name>GTP</name>
        <dbReference type="ChEBI" id="CHEBI:37565"/>
    </ligand>
</feature>
<feature type="binding site" evidence="1">
    <location>
        <begin position="88"/>
        <end position="92"/>
    </location>
    <ligand>
        <name>GTP</name>
        <dbReference type="ChEBI" id="CHEBI:37565"/>
    </ligand>
</feature>
<feature type="binding site" evidence="1">
    <location>
        <begin position="142"/>
        <end position="145"/>
    </location>
    <ligand>
        <name>GTP</name>
        <dbReference type="ChEBI" id="CHEBI:37565"/>
    </ligand>
</feature>
<comment type="function">
    <text evidence="1">Catalyzes the GTP-dependent ribosomal translocation step during translation elongation. During this step, the ribosome changes from the pre-translocational (PRE) to the post-translocational (POST) state as the newly formed A-site-bound peptidyl-tRNA and P-site-bound deacylated tRNA move to the P and E sites, respectively. Catalyzes the coordinated movement of the two tRNA molecules, the mRNA and conformational changes in the ribosome.</text>
</comment>
<comment type="subcellular location">
    <subcellularLocation>
        <location evidence="1">Cytoplasm</location>
    </subcellularLocation>
</comment>
<comment type="similarity">
    <text evidence="1">Belongs to the TRAFAC class translation factor GTPase superfamily. Classic translation factor GTPase family. EF-G/EF-2 subfamily.</text>
</comment>
<dbReference type="EMBL" id="CP001657">
    <property type="protein sequence ID" value="ACT14843.1"/>
    <property type="molecule type" value="Genomic_DNA"/>
</dbReference>
<dbReference type="RefSeq" id="WP_015841930.1">
    <property type="nucleotide sequence ID" value="NC_012917.1"/>
</dbReference>
<dbReference type="SMR" id="C6DG80"/>
<dbReference type="STRING" id="561230.PC1_3828"/>
<dbReference type="GeneID" id="67792275"/>
<dbReference type="KEGG" id="pct:PC1_3828"/>
<dbReference type="eggNOG" id="COG0480">
    <property type="taxonomic scope" value="Bacteria"/>
</dbReference>
<dbReference type="HOGENOM" id="CLU_002794_4_1_6"/>
<dbReference type="OrthoDB" id="9804431at2"/>
<dbReference type="Proteomes" id="UP000002736">
    <property type="component" value="Chromosome"/>
</dbReference>
<dbReference type="GO" id="GO:0005737">
    <property type="term" value="C:cytoplasm"/>
    <property type="evidence" value="ECO:0007669"/>
    <property type="project" value="UniProtKB-SubCell"/>
</dbReference>
<dbReference type="GO" id="GO:0005525">
    <property type="term" value="F:GTP binding"/>
    <property type="evidence" value="ECO:0007669"/>
    <property type="project" value="UniProtKB-UniRule"/>
</dbReference>
<dbReference type="GO" id="GO:0003924">
    <property type="term" value="F:GTPase activity"/>
    <property type="evidence" value="ECO:0007669"/>
    <property type="project" value="InterPro"/>
</dbReference>
<dbReference type="GO" id="GO:0097216">
    <property type="term" value="F:guanosine tetraphosphate binding"/>
    <property type="evidence" value="ECO:0007669"/>
    <property type="project" value="UniProtKB-ARBA"/>
</dbReference>
<dbReference type="GO" id="GO:0003746">
    <property type="term" value="F:translation elongation factor activity"/>
    <property type="evidence" value="ECO:0007669"/>
    <property type="project" value="UniProtKB-UniRule"/>
</dbReference>
<dbReference type="GO" id="GO:0032790">
    <property type="term" value="P:ribosome disassembly"/>
    <property type="evidence" value="ECO:0007669"/>
    <property type="project" value="TreeGrafter"/>
</dbReference>
<dbReference type="CDD" id="cd01886">
    <property type="entry name" value="EF-G"/>
    <property type="match status" value="1"/>
</dbReference>
<dbReference type="CDD" id="cd16262">
    <property type="entry name" value="EFG_III"/>
    <property type="match status" value="1"/>
</dbReference>
<dbReference type="CDD" id="cd01434">
    <property type="entry name" value="EFG_mtEFG1_IV"/>
    <property type="match status" value="1"/>
</dbReference>
<dbReference type="CDD" id="cd03713">
    <property type="entry name" value="EFG_mtEFG_C"/>
    <property type="match status" value="1"/>
</dbReference>
<dbReference type="CDD" id="cd04088">
    <property type="entry name" value="EFG_mtEFG_II"/>
    <property type="match status" value="1"/>
</dbReference>
<dbReference type="FunFam" id="2.40.30.10:FF:000006">
    <property type="entry name" value="Elongation factor G"/>
    <property type="match status" value="1"/>
</dbReference>
<dbReference type="FunFam" id="3.30.230.10:FF:000003">
    <property type="entry name" value="Elongation factor G"/>
    <property type="match status" value="1"/>
</dbReference>
<dbReference type="FunFam" id="3.30.70.240:FF:000001">
    <property type="entry name" value="Elongation factor G"/>
    <property type="match status" value="1"/>
</dbReference>
<dbReference type="FunFam" id="3.30.70.870:FF:000001">
    <property type="entry name" value="Elongation factor G"/>
    <property type="match status" value="1"/>
</dbReference>
<dbReference type="FunFam" id="3.40.50.300:FF:000029">
    <property type="entry name" value="Elongation factor G"/>
    <property type="match status" value="1"/>
</dbReference>
<dbReference type="Gene3D" id="3.30.230.10">
    <property type="match status" value="1"/>
</dbReference>
<dbReference type="Gene3D" id="3.30.70.240">
    <property type="match status" value="1"/>
</dbReference>
<dbReference type="Gene3D" id="3.30.70.870">
    <property type="entry name" value="Elongation Factor G (Translational Gtpase), domain 3"/>
    <property type="match status" value="1"/>
</dbReference>
<dbReference type="Gene3D" id="3.40.50.300">
    <property type="entry name" value="P-loop containing nucleotide triphosphate hydrolases"/>
    <property type="match status" value="1"/>
</dbReference>
<dbReference type="Gene3D" id="2.40.30.10">
    <property type="entry name" value="Translation factors"/>
    <property type="match status" value="1"/>
</dbReference>
<dbReference type="HAMAP" id="MF_00054_B">
    <property type="entry name" value="EF_G_EF_2_B"/>
    <property type="match status" value="1"/>
</dbReference>
<dbReference type="InterPro" id="IPR041095">
    <property type="entry name" value="EFG_II"/>
</dbReference>
<dbReference type="InterPro" id="IPR009022">
    <property type="entry name" value="EFG_III"/>
</dbReference>
<dbReference type="InterPro" id="IPR035647">
    <property type="entry name" value="EFG_III/V"/>
</dbReference>
<dbReference type="InterPro" id="IPR047872">
    <property type="entry name" value="EFG_IV"/>
</dbReference>
<dbReference type="InterPro" id="IPR035649">
    <property type="entry name" value="EFG_V"/>
</dbReference>
<dbReference type="InterPro" id="IPR000640">
    <property type="entry name" value="EFG_V-like"/>
</dbReference>
<dbReference type="InterPro" id="IPR004161">
    <property type="entry name" value="EFTu-like_2"/>
</dbReference>
<dbReference type="InterPro" id="IPR031157">
    <property type="entry name" value="G_TR_CS"/>
</dbReference>
<dbReference type="InterPro" id="IPR027417">
    <property type="entry name" value="P-loop_NTPase"/>
</dbReference>
<dbReference type="InterPro" id="IPR020568">
    <property type="entry name" value="Ribosomal_Su5_D2-typ_SF"/>
</dbReference>
<dbReference type="InterPro" id="IPR014721">
    <property type="entry name" value="Ribsml_uS5_D2-typ_fold_subgr"/>
</dbReference>
<dbReference type="InterPro" id="IPR005225">
    <property type="entry name" value="Small_GTP-bd"/>
</dbReference>
<dbReference type="InterPro" id="IPR000795">
    <property type="entry name" value="T_Tr_GTP-bd_dom"/>
</dbReference>
<dbReference type="InterPro" id="IPR009000">
    <property type="entry name" value="Transl_B-barrel_sf"/>
</dbReference>
<dbReference type="InterPro" id="IPR004540">
    <property type="entry name" value="Transl_elong_EFG/EF2"/>
</dbReference>
<dbReference type="InterPro" id="IPR005517">
    <property type="entry name" value="Transl_elong_EFG/EF2_IV"/>
</dbReference>
<dbReference type="NCBIfam" id="TIGR00484">
    <property type="entry name" value="EF-G"/>
    <property type="match status" value="1"/>
</dbReference>
<dbReference type="NCBIfam" id="NF009381">
    <property type="entry name" value="PRK12740.1-5"/>
    <property type="match status" value="1"/>
</dbReference>
<dbReference type="NCBIfam" id="TIGR00231">
    <property type="entry name" value="small_GTP"/>
    <property type="match status" value="1"/>
</dbReference>
<dbReference type="PANTHER" id="PTHR43261:SF1">
    <property type="entry name" value="RIBOSOME-RELEASING FACTOR 2, MITOCHONDRIAL"/>
    <property type="match status" value="1"/>
</dbReference>
<dbReference type="PANTHER" id="PTHR43261">
    <property type="entry name" value="TRANSLATION ELONGATION FACTOR G-RELATED"/>
    <property type="match status" value="1"/>
</dbReference>
<dbReference type="Pfam" id="PF00679">
    <property type="entry name" value="EFG_C"/>
    <property type="match status" value="1"/>
</dbReference>
<dbReference type="Pfam" id="PF14492">
    <property type="entry name" value="EFG_III"/>
    <property type="match status" value="1"/>
</dbReference>
<dbReference type="Pfam" id="PF03764">
    <property type="entry name" value="EFG_IV"/>
    <property type="match status" value="1"/>
</dbReference>
<dbReference type="Pfam" id="PF00009">
    <property type="entry name" value="GTP_EFTU"/>
    <property type="match status" value="1"/>
</dbReference>
<dbReference type="Pfam" id="PF03144">
    <property type="entry name" value="GTP_EFTU_D2"/>
    <property type="match status" value="1"/>
</dbReference>
<dbReference type="PRINTS" id="PR00315">
    <property type="entry name" value="ELONGATNFCT"/>
</dbReference>
<dbReference type="SMART" id="SM00838">
    <property type="entry name" value="EFG_C"/>
    <property type="match status" value="1"/>
</dbReference>
<dbReference type="SMART" id="SM00889">
    <property type="entry name" value="EFG_IV"/>
    <property type="match status" value="1"/>
</dbReference>
<dbReference type="SUPFAM" id="SSF54980">
    <property type="entry name" value="EF-G C-terminal domain-like"/>
    <property type="match status" value="2"/>
</dbReference>
<dbReference type="SUPFAM" id="SSF52540">
    <property type="entry name" value="P-loop containing nucleoside triphosphate hydrolases"/>
    <property type="match status" value="1"/>
</dbReference>
<dbReference type="SUPFAM" id="SSF54211">
    <property type="entry name" value="Ribosomal protein S5 domain 2-like"/>
    <property type="match status" value="1"/>
</dbReference>
<dbReference type="SUPFAM" id="SSF50447">
    <property type="entry name" value="Translation proteins"/>
    <property type="match status" value="1"/>
</dbReference>
<dbReference type="PROSITE" id="PS00301">
    <property type="entry name" value="G_TR_1"/>
    <property type="match status" value="1"/>
</dbReference>
<dbReference type="PROSITE" id="PS51722">
    <property type="entry name" value="G_TR_2"/>
    <property type="match status" value="1"/>
</dbReference>
<proteinExistence type="inferred from homology"/>
<name>EFG_PECCP</name>
<organism>
    <name type="scientific">Pectobacterium carotovorum subsp. carotovorum (strain PC1)</name>
    <dbReference type="NCBI Taxonomy" id="561230"/>
    <lineage>
        <taxon>Bacteria</taxon>
        <taxon>Pseudomonadati</taxon>
        <taxon>Pseudomonadota</taxon>
        <taxon>Gammaproteobacteria</taxon>
        <taxon>Enterobacterales</taxon>
        <taxon>Pectobacteriaceae</taxon>
        <taxon>Pectobacterium</taxon>
    </lineage>
</organism>
<protein>
    <recommendedName>
        <fullName evidence="1">Elongation factor G</fullName>
        <shortName evidence="1">EF-G</shortName>
    </recommendedName>
</protein>
<keyword id="KW-0963">Cytoplasm</keyword>
<keyword id="KW-0251">Elongation factor</keyword>
<keyword id="KW-0342">GTP-binding</keyword>
<keyword id="KW-0547">Nucleotide-binding</keyword>
<keyword id="KW-0648">Protein biosynthesis</keyword>
<sequence>MARTTPIARYRNIGISAHIDAGKTTTTERILFYTGVNHKIGEVHDGAATMDWMEQEQERGITITSAATTAFWSGMAKQYEPHRVNIIDTPGHVDFTIEVERSMRVLDGAVMVYCAVGGVQPQSETVWRQANKYKVPRIAFVNKMDRMGANFLKVVGQIKSRLGANPVPLQLAIGAEEGFTGVVDLVKMKAINWNDADQGVTFEYEDIPADMQDLADEWHQNLIESAAEASEELMEKYLGGEELTEEEIKKALRQRVLNNEIILVTCGSAFKNKGVQAMLDAVVDYLPSPVDVPAINGILDDGKDTPAERHASDDEPFAALAFKIATDPFVGNLTFFRVYSGVVNSGDTVLNPVKSARERFGRIVQMHANKREEIKEVRAGDIAAAIGLKDVTTGDTLCDPDNVIILERMEFPEPVISIAVEPKTKADQEKMGLALGRLAKEDPSFRVWTDEESNQTIIAGMGELHLDIIVDRMKREFNVEANVGKPQVAYREAIRAKVTDIEGKHAKQSGGRGQYGHVVIDMYPLEPGSNPKGYEFINDIKGGVIPGEYIPAVDKGIQEQLKAGPLAGYPVVDLGVRLHFGSFHDVDSSELAFKLAASIAFKDGFKKAKPVLLEPIMKVEVETPEENTGDVIGDLSRRRGMLRGQESNVTGVVIHAEVPLSEMFGYATQLRSLTKGRASYSMEFLKYDDAPNNVAQAVIEARGK</sequence>
<reference key="1">
    <citation type="submission" date="2009-07" db="EMBL/GenBank/DDBJ databases">
        <title>Complete sequence of Pectobacterium carotovorum subsp. carotovorum PC1.</title>
        <authorList>
            <consortium name="US DOE Joint Genome Institute"/>
            <person name="Lucas S."/>
            <person name="Copeland A."/>
            <person name="Lapidus A."/>
            <person name="Glavina del Rio T."/>
            <person name="Tice H."/>
            <person name="Bruce D."/>
            <person name="Goodwin L."/>
            <person name="Pitluck S."/>
            <person name="Munk A.C."/>
            <person name="Brettin T."/>
            <person name="Detter J.C."/>
            <person name="Han C."/>
            <person name="Tapia R."/>
            <person name="Larimer F."/>
            <person name="Land M."/>
            <person name="Hauser L."/>
            <person name="Kyrpides N."/>
            <person name="Mikhailova N."/>
            <person name="Balakrishnan V."/>
            <person name="Glasner J."/>
            <person name="Perna N.T."/>
        </authorList>
    </citation>
    <scope>NUCLEOTIDE SEQUENCE [LARGE SCALE GENOMIC DNA]</scope>
    <source>
        <strain>PC1</strain>
    </source>
</reference>
<accession>C6DG80</accession>
<evidence type="ECO:0000255" key="1">
    <source>
        <dbReference type="HAMAP-Rule" id="MF_00054"/>
    </source>
</evidence>
<gene>
    <name evidence="1" type="primary">fusA</name>
    <name type="ordered locus">PC1_3828</name>
</gene>